<organism>
    <name type="scientific">Burkholderia mallei (strain SAVP1)</name>
    <dbReference type="NCBI Taxonomy" id="320388"/>
    <lineage>
        <taxon>Bacteria</taxon>
        <taxon>Pseudomonadati</taxon>
        <taxon>Pseudomonadota</taxon>
        <taxon>Betaproteobacteria</taxon>
        <taxon>Burkholderiales</taxon>
        <taxon>Burkholderiaceae</taxon>
        <taxon>Burkholderia</taxon>
        <taxon>pseudomallei group</taxon>
    </lineage>
</organism>
<dbReference type="EMBL" id="CP000526">
    <property type="protein sequence ID" value="ABM51501.1"/>
    <property type="molecule type" value="Genomic_DNA"/>
</dbReference>
<dbReference type="RefSeq" id="WP_004186698.1">
    <property type="nucleotide sequence ID" value="NC_008785.1"/>
</dbReference>
<dbReference type="SMR" id="A1V1P0"/>
<dbReference type="GeneID" id="92979820"/>
<dbReference type="KEGG" id="bmv:BMASAVP1_A0799"/>
<dbReference type="HOGENOM" id="CLU_067812_0_0_4"/>
<dbReference type="GO" id="GO:0000902">
    <property type="term" value="P:cell morphogenesis"/>
    <property type="evidence" value="ECO:0007669"/>
    <property type="project" value="InterPro"/>
</dbReference>
<dbReference type="GO" id="GO:0000917">
    <property type="term" value="P:division septum assembly"/>
    <property type="evidence" value="ECO:0007669"/>
    <property type="project" value="UniProtKB-KW"/>
</dbReference>
<dbReference type="GO" id="GO:0051302">
    <property type="term" value="P:regulation of cell division"/>
    <property type="evidence" value="ECO:0007669"/>
    <property type="project" value="InterPro"/>
</dbReference>
<dbReference type="GO" id="GO:1901891">
    <property type="term" value="P:regulation of cell septum assembly"/>
    <property type="evidence" value="ECO:0007669"/>
    <property type="project" value="InterPro"/>
</dbReference>
<dbReference type="Gene3D" id="2.160.20.70">
    <property type="match status" value="1"/>
</dbReference>
<dbReference type="Gene3D" id="3.30.70.260">
    <property type="match status" value="1"/>
</dbReference>
<dbReference type="HAMAP" id="MF_00267">
    <property type="entry name" value="MinC"/>
    <property type="match status" value="1"/>
</dbReference>
<dbReference type="InterPro" id="IPR016098">
    <property type="entry name" value="CAP/MinC_C"/>
</dbReference>
<dbReference type="InterPro" id="IPR013033">
    <property type="entry name" value="MinC"/>
</dbReference>
<dbReference type="InterPro" id="IPR036145">
    <property type="entry name" value="MinC_C_sf"/>
</dbReference>
<dbReference type="InterPro" id="IPR007874">
    <property type="entry name" value="MinC_N"/>
</dbReference>
<dbReference type="InterPro" id="IPR005526">
    <property type="entry name" value="Septum_form_inhib_MinC_C"/>
</dbReference>
<dbReference type="NCBIfam" id="TIGR01222">
    <property type="entry name" value="minC"/>
    <property type="match status" value="1"/>
</dbReference>
<dbReference type="PANTHER" id="PTHR34108">
    <property type="entry name" value="SEPTUM SITE-DETERMINING PROTEIN MINC"/>
    <property type="match status" value="1"/>
</dbReference>
<dbReference type="PANTHER" id="PTHR34108:SF1">
    <property type="entry name" value="SEPTUM SITE-DETERMINING PROTEIN MINC"/>
    <property type="match status" value="1"/>
</dbReference>
<dbReference type="Pfam" id="PF03775">
    <property type="entry name" value="MinC_C"/>
    <property type="match status" value="1"/>
</dbReference>
<dbReference type="Pfam" id="PF05209">
    <property type="entry name" value="MinC_N"/>
    <property type="match status" value="1"/>
</dbReference>
<dbReference type="SUPFAM" id="SSF63848">
    <property type="entry name" value="Cell-division inhibitor MinC, C-terminal domain"/>
    <property type="match status" value="1"/>
</dbReference>
<reference key="1">
    <citation type="journal article" date="2010" name="Genome Biol. Evol.">
        <title>Continuing evolution of Burkholderia mallei through genome reduction and large-scale rearrangements.</title>
        <authorList>
            <person name="Losada L."/>
            <person name="Ronning C.M."/>
            <person name="DeShazer D."/>
            <person name="Woods D."/>
            <person name="Fedorova N."/>
            <person name="Kim H.S."/>
            <person name="Shabalina S.A."/>
            <person name="Pearson T.R."/>
            <person name="Brinkac L."/>
            <person name="Tan P."/>
            <person name="Nandi T."/>
            <person name="Crabtree J."/>
            <person name="Badger J."/>
            <person name="Beckstrom-Sternberg S."/>
            <person name="Saqib M."/>
            <person name="Schutzer S.E."/>
            <person name="Keim P."/>
            <person name="Nierman W.C."/>
        </authorList>
    </citation>
    <scope>NUCLEOTIDE SEQUENCE [LARGE SCALE GENOMIC DNA]</scope>
    <source>
        <strain>SAVP1</strain>
    </source>
</reference>
<sequence>MSLKKSPFFELRSGSVDTLLFIVKTADLDALRAELVKRFEATPEFFADDVVAIDVRRLADHERVPLDDIRGMLNDVRMRVIGVVAQPEQHAWAASAGLPLLEARDRRAPSSKAADEAPVQQAEPAAPAAGQAALFEQAGPTLADAGAPPESPAPAVAAQSATLVVDRPLHSGQQIYAKGDLVVLGPVSYGAEVIAEGNIHIYAPLRGRALAGVHGNHDARIFCTCLEPELISIAGIYRTTENPLPADVLGKSVQIRLEQEKLMIEPLRLT</sequence>
<protein>
    <recommendedName>
        <fullName evidence="1">Probable septum site-determining protein MinC</fullName>
    </recommendedName>
</protein>
<proteinExistence type="inferred from homology"/>
<gene>
    <name evidence="1" type="primary">minC</name>
    <name type="ordered locus">BMASAVP1_A0799</name>
</gene>
<comment type="function">
    <text evidence="1">Cell division inhibitor that blocks the formation of polar Z ring septums. Rapidly oscillates between the poles of the cell to destabilize FtsZ filaments that have formed before they mature into polar Z rings. Prevents FtsZ polymerization.</text>
</comment>
<comment type="subunit">
    <text evidence="1">Interacts with MinD and FtsZ.</text>
</comment>
<comment type="similarity">
    <text evidence="1">Belongs to the MinC family.</text>
</comment>
<evidence type="ECO:0000255" key="1">
    <source>
        <dbReference type="HAMAP-Rule" id="MF_00267"/>
    </source>
</evidence>
<evidence type="ECO:0000256" key="2">
    <source>
        <dbReference type="SAM" id="MobiDB-lite"/>
    </source>
</evidence>
<accession>A1V1P0</accession>
<name>MINC_BURMS</name>
<keyword id="KW-0131">Cell cycle</keyword>
<keyword id="KW-0132">Cell division</keyword>
<keyword id="KW-0717">Septation</keyword>
<feature type="chain" id="PRO_1000047813" description="Probable septum site-determining protein MinC">
    <location>
        <begin position="1"/>
        <end position="270"/>
    </location>
</feature>
<feature type="region of interest" description="Disordered" evidence="2">
    <location>
        <begin position="105"/>
        <end position="129"/>
    </location>
</feature>
<feature type="compositionally biased region" description="Low complexity" evidence="2">
    <location>
        <begin position="116"/>
        <end position="129"/>
    </location>
</feature>